<protein>
    <recommendedName>
        <fullName evidence="1">UDP-N-acetylglucosamine--N-acetylmuramyl-(pentapeptide) pyrophosphoryl-undecaprenol N-acetylglucosamine transferase</fullName>
        <ecNumber evidence="1">2.4.1.227</ecNumber>
    </recommendedName>
    <alternativeName>
        <fullName evidence="1">Undecaprenyl-PP-MurNAc-pentapeptide-UDPGlcNAc GlcNAc transferase</fullName>
    </alternativeName>
</protein>
<organism>
    <name type="scientific">Paracidovorax citrulli (strain AAC00-1)</name>
    <name type="common">Acidovorax citrulli</name>
    <dbReference type="NCBI Taxonomy" id="397945"/>
    <lineage>
        <taxon>Bacteria</taxon>
        <taxon>Pseudomonadati</taxon>
        <taxon>Pseudomonadota</taxon>
        <taxon>Betaproteobacteria</taxon>
        <taxon>Burkholderiales</taxon>
        <taxon>Comamonadaceae</taxon>
        <taxon>Paracidovorax</taxon>
    </lineage>
</organism>
<name>MURG_PARC0</name>
<feature type="chain" id="PRO_0000315058" description="UDP-N-acetylglucosamine--N-acetylmuramyl-(pentapeptide) pyrophosphoryl-undecaprenol N-acetylglucosamine transferase">
    <location>
        <begin position="1"/>
        <end position="355"/>
    </location>
</feature>
<feature type="binding site" evidence="1">
    <location>
        <begin position="14"/>
        <end position="16"/>
    </location>
    <ligand>
        <name>UDP-N-acetyl-alpha-D-glucosamine</name>
        <dbReference type="ChEBI" id="CHEBI:57705"/>
    </ligand>
</feature>
<feature type="binding site" evidence="1">
    <location>
        <position position="126"/>
    </location>
    <ligand>
        <name>UDP-N-acetyl-alpha-D-glucosamine</name>
        <dbReference type="ChEBI" id="CHEBI:57705"/>
    </ligand>
</feature>
<feature type="binding site" evidence="1">
    <location>
        <position position="162"/>
    </location>
    <ligand>
        <name>UDP-N-acetyl-alpha-D-glucosamine</name>
        <dbReference type="ChEBI" id="CHEBI:57705"/>
    </ligand>
</feature>
<feature type="binding site" evidence="1">
    <location>
        <position position="190"/>
    </location>
    <ligand>
        <name>UDP-N-acetyl-alpha-D-glucosamine</name>
        <dbReference type="ChEBI" id="CHEBI:57705"/>
    </ligand>
</feature>
<feature type="binding site" evidence="1">
    <location>
        <position position="244"/>
    </location>
    <ligand>
        <name>UDP-N-acetyl-alpha-D-glucosamine</name>
        <dbReference type="ChEBI" id="CHEBI:57705"/>
    </ligand>
</feature>
<feature type="binding site" evidence="1">
    <location>
        <position position="289"/>
    </location>
    <ligand>
        <name>UDP-N-acetyl-alpha-D-glucosamine</name>
        <dbReference type="ChEBI" id="CHEBI:57705"/>
    </ligand>
</feature>
<evidence type="ECO:0000255" key="1">
    <source>
        <dbReference type="HAMAP-Rule" id="MF_00033"/>
    </source>
</evidence>
<dbReference type="EC" id="2.4.1.227" evidence="1"/>
<dbReference type="EMBL" id="CP000512">
    <property type="protein sequence ID" value="ABM31419.1"/>
    <property type="molecule type" value="Genomic_DNA"/>
</dbReference>
<dbReference type="RefSeq" id="WP_011793979.1">
    <property type="nucleotide sequence ID" value="NC_008752.1"/>
</dbReference>
<dbReference type="SMR" id="A1TKD1"/>
<dbReference type="STRING" id="397945.Aave_0821"/>
<dbReference type="CAZy" id="GT28">
    <property type="family name" value="Glycosyltransferase Family 28"/>
</dbReference>
<dbReference type="KEGG" id="aav:Aave_0821"/>
<dbReference type="eggNOG" id="COG0707">
    <property type="taxonomic scope" value="Bacteria"/>
</dbReference>
<dbReference type="HOGENOM" id="CLU_037404_2_0_4"/>
<dbReference type="OrthoDB" id="9808936at2"/>
<dbReference type="UniPathway" id="UPA00219"/>
<dbReference type="Proteomes" id="UP000002596">
    <property type="component" value="Chromosome"/>
</dbReference>
<dbReference type="GO" id="GO:0005886">
    <property type="term" value="C:plasma membrane"/>
    <property type="evidence" value="ECO:0007669"/>
    <property type="project" value="UniProtKB-SubCell"/>
</dbReference>
<dbReference type="GO" id="GO:0051991">
    <property type="term" value="F:UDP-N-acetyl-D-glucosamine:N-acetylmuramoyl-L-alanyl-D-glutamyl-meso-2,6-diaminopimelyl-D-alanyl-D-alanine-diphosphoundecaprenol 4-beta-N-acetylglucosaminlytransferase activity"/>
    <property type="evidence" value="ECO:0007669"/>
    <property type="project" value="RHEA"/>
</dbReference>
<dbReference type="GO" id="GO:0050511">
    <property type="term" value="F:undecaprenyldiphospho-muramoylpentapeptide beta-N-acetylglucosaminyltransferase activity"/>
    <property type="evidence" value="ECO:0007669"/>
    <property type="project" value="UniProtKB-UniRule"/>
</dbReference>
<dbReference type="GO" id="GO:0005975">
    <property type="term" value="P:carbohydrate metabolic process"/>
    <property type="evidence" value="ECO:0007669"/>
    <property type="project" value="InterPro"/>
</dbReference>
<dbReference type="GO" id="GO:0051301">
    <property type="term" value="P:cell division"/>
    <property type="evidence" value="ECO:0007669"/>
    <property type="project" value="UniProtKB-KW"/>
</dbReference>
<dbReference type="GO" id="GO:0071555">
    <property type="term" value="P:cell wall organization"/>
    <property type="evidence" value="ECO:0007669"/>
    <property type="project" value="UniProtKB-KW"/>
</dbReference>
<dbReference type="GO" id="GO:0030259">
    <property type="term" value="P:lipid glycosylation"/>
    <property type="evidence" value="ECO:0007669"/>
    <property type="project" value="UniProtKB-UniRule"/>
</dbReference>
<dbReference type="GO" id="GO:0009252">
    <property type="term" value="P:peptidoglycan biosynthetic process"/>
    <property type="evidence" value="ECO:0007669"/>
    <property type="project" value="UniProtKB-UniRule"/>
</dbReference>
<dbReference type="GO" id="GO:0008360">
    <property type="term" value="P:regulation of cell shape"/>
    <property type="evidence" value="ECO:0007669"/>
    <property type="project" value="UniProtKB-KW"/>
</dbReference>
<dbReference type="CDD" id="cd03785">
    <property type="entry name" value="GT28_MurG"/>
    <property type="match status" value="1"/>
</dbReference>
<dbReference type="Gene3D" id="3.40.50.2000">
    <property type="entry name" value="Glycogen Phosphorylase B"/>
    <property type="match status" value="2"/>
</dbReference>
<dbReference type="HAMAP" id="MF_00033">
    <property type="entry name" value="MurG"/>
    <property type="match status" value="1"/>
</dbReference>
<dbReference type="InterPro" id="IPR006009">
    <property type="entry name" value="GlcNAc_MurG"/>
</dbReference>
<dbReference type="InterPro" id="IPR007235">
    <property type="entry name" value="Glyco_trans_28_C"/>
</dbReference>
<dbReference type="InterPro" id="IPR004276">
    <property type="entry name" value="GlycoTrans_28_N"/>
</dbReference>
<dbReference type="NCBIfam" id="TIGR01133">
    <property type="entry name" value="murG"/>
    <property type="match status" value="1"/>
</dbReference>
<dbReference type="PANTHER" id="PTHR21015:SF22">
    <property type="entry name" value="GLYCOSYLTRANSFERASE"/>
    <property type="match status" value="1"/>
</dbReference>
<dbReference type="PANTHER" id="PTHR21015">
    <property type="entry name" value="UDP-N-ACETYLGLUCOSAMINE--N-ACETYLMURAMYL-(PENTAPEPTIDE) PYROPHOSPHORYL-UNDECAPRENOL N-ACETYLGLUCOSAMINE TRANSFERASE 1"/>
    <property type="match status" value="1"/>
</dbReference>
<dbReference type="Pfam" id="PF04101">
    <property type="entry name" value="Glyco_tran_28_C"/>
    <property type="match status" value="1"/>
</dbReference>
<dbReference type="Pfam" id="PF03033">
    <property type="entry name" value="Glyco_transf_28"/>
    <property type="match status" value="1"/>
</dbReference>
<dbReference type="SUPFAM" id="SSF53756">
    <property type="entry name" value="UDP-Glycosyltransferase/glycogen phosphorylase"/>
    <property type="match status" value="1"/>
</dbReference>
<accession>A1TKD1</accession>
<keyword id="KW-0131">Cell cycle</keyword>
<keyword id="KW-0132">Cell division</keyword>
<keyword id="KW-0997">Cell inner membrane</keyword>
<keyword id="KW-1003">Cell membrane</keyword>
<keyword id="KW-0133">Cell shape</keyword>
<keyword id="KW-0961">Cell wall biogenesis/degradation</keyword>
<keyword id="KW-0328">Glycosyltransferase</keyword>
<keyword id="KW-0472">Membrane</keyword>
<keyword id="KW-0573">Peptidoglycan synthesis</keyword>
<keyword id="KW-0808">Transferase</keyword>
<gene>
    <name evidence="1" type="primary">murG</name>
    <name type="ordered locus">Aave_0821</name>
</gene>
<sequence>MTHPRTALVMAGGTGGHIFPGLAVAEELRARGWKVHWLGTPGSMESRIVPPQGFAFEPIDFSGVRGKGLATLALLPLRLLRAFWQALAVVRRVQPDVVVGLGGYVTFPGGMMAVLCGKPLVVHEQNSVAGLVNKVLAGVADRVFTAFPGALRKGAWVGNPLRTAFTRQADPQARFAGRGGPLRLLVVGGSLGAKALNDIVPQALALIPAERRPVVTHQSGTAQIDALRANYAAAGVEATLTPFIDDTATAFAEADLIVCRAGASTVTEIAAVGAAAVFVPFPHAVDDHQTANARFLADAGGGWLVQQRDLSAEALAQLLQNTEREALLERALKAKTMQKIHATREVANACEELTA</sequence>
<proteinExistence type="inferred from homology"/>
<comment type="function">
    <text evidence="1">Cell wall formation. Catalyzes the transfer of a GlcNAc subunit on undecaprenyl-pyrophosphoryl-MurNAc-pentapeptide (lipid intermediate I) to form undecaprenyl-pyrophosphoryl-MurNAc-(pentapeptide)GlcNAc (lipid intermediate II).</text>
</comment>
<comment type="catalytic activity">
    <reaction evidence="1">
        <text>di-trans,octa-cis-undecaprenyl diphospho-N-acetyl-alpha-D-muramoyl-L-alanyl-D-glutamyl-meso-2,6-diaminopimeloyl-D-alanyl-D-alanine + UDP-N-acetyl-alpha-D-glucosamine = di-trans,octa-cis-undecaprenyl diphospho-[N-acetyl-alpha-D-glucosaminyl-(1-&gt;4)]-N-acetyl-alpha-D-muramoyl-L-alanyl-D-glutamyl-meso-2,6-diaminopimeloyl-D-alanyl-D-alanine + UDP + H(+)</text>
        <dbReference type="Rhea" id="RHEA:31227"/>
        <dbReference type="ChEBI" id="CHEBI:15378"/>
        <dbReference type="ChEBI" id="CHEBI:57705"/>
        <dbReference type="ChEBI" id="CHEBI:58223"/>
        <dbReference type="ChEBI" id="CHEBI:61387"/>
        <dbReference type="ChEBI" id="CHEBI:61388"/>
        <dbReference type="EC" id="2.4.1.227"/>
    </reaction>
</comment>
<comment type="pathway">
    <text evidence="1">Cell wall biogenesis; peptidoglycan biosynthesis.</text>
</comment>
<comment type="subcellular location">
    <subcellularLocation>
        <location evidence="1">Cell inner membrane</location>
        <topology evidence="1">Peripheral membrane protein</topology>
        <orientation evidence="1">Cytoplasmic side</orientation>
    </subcellularLocation>
</comment>
<comment type="similarity">
    <text evidence="1">Belongs to the glycosyltransferase 28 family. MurG subfamily.</text>
</comment>
<reference key="1">
    <citation type="submission" date="2006-12" db="EMBL/GenBank/DDBJ databases">
        <title>Complete sequence of Acidovorax avenae subsp. citrulli AAC00-1.</title>
        <authorList>
            <person name="Copeland A."/>
            <person name="Lucas S."/>
            <person name="Lapidus A."/>
            <person name="Barry K."/>
            <person name="Detter J.C."/>
            <person name="Glavina del Rio T."/>
            <person name="Dalin E."/>
            <person name="Tice H."/>
            <person name="Pitluck S."/>
            <person name="Kiss H."/>
            <person name="Brettin T."/>
            <person name="Bruce D."/>
            <person name="Han C."/>
            <person name="Tapia R."/>
            <person name="Gilna P."/>
            <person name="Schmutz J."/>
            <person name="Larimer F."/>
            <person name="Land M."/>
            <person name="Hauser L."/>
            <person name="Kyrpides N."/>
            <person name="Kim E."/>
            <person name="Stahl D."/>
            <person name="Richardson P."/>
        </authorList>
    </citation>
    <scope>NUCLEOTIDE SEQUENCE [LARGE SCALE GENOMIC DNA]</scope>
    <source>
        <strain>AAC00-1</strain>
    </source>
</reference>